<sequence length="426" mass="48106">MSSLLLNKEIFSKSISIVGLKVNKTLLKTLAQEFKGYLLIRDRVKHIVDDSDSKDKKLVLLSESIENGNVGAYGVNKQLPDNLQSFLKTHSIEVVKHQVQLNYNNFSYEEVMKELIPTGLPIPHAFEKIGHIAHLNLKEELLPYKNMIGQVILDKKGPQIRTVLNKVGKIDTVFRTFNFELLAGDNDLLAQVVYWNSRLQFEHSNLIQTFKSHDIVVDMFAGVGPFAVPASKLVKCKVYANDLNPNSVKYMRENATRNKASTIEISNLDARDFVRELVSRDPPVAFTQAIMNLPSTSIEFLDVFREIFLNPEKAPPIPAPTIHCYTFTPVSETAGGDLKELTIKNVEAIIKHPLPADTTVYEVRDVSPNKRMMRISFKMPTLKKRKDTENNDDQENNNNSSNNNNNNKIDYNEAVSSGGEGKKIKH</sequence>
<keyword id="KW-0963">Cytoplasm</keyword>
<keyword id="KW-0489">Methyltransferase</keyword>
<keyword id="KW-0496">Mitochondrion</keyword>
<keyword id="KW-0539">Nucleus</keyword>
<keyword id="KW-1185">Reference proteome</keyword>
<keyword id="KW-0949">S-adenosyl-L-methionine</keyword>
<keyword id="KW-0808">Transferase</keyword>
<keyword id="KW-0819">tRNA processing</keyword>
<organism>
    <name type="scientific">Heterostelium pallidum (strain ATCC 26659 / Pp 5 / PN500)</name>
    <name type="common">Cellular slime mold</name>
    <name type="synonym">Polysphondylium pallidum</name>
    <dbReference type="NCBI Taxonomy" id="670386"/>
    <lineage>
        <taxon>Eukaryota</taxon>
        <taxon>Amoebozoa</taxon>
        <taxon>Evosea</taxon>
        <taxon>Eumycetozoa</taxon>
        <taxon>Dictyostelia</taxon>
        <taxon>Acytosteliales</taxon>
        <taxon>Acytosteliaceae</taxon>
        <taxon>Heterostelium</taxon>
    </lineage>
</organism>
<comment type="function">
    <text evidence="1">Specifically methylates the N1 position of guanosine-37 in various cytoplasmic and mitochondrial tRNAs. Methylation is not dependent on the nature of the nucleoside 5' of the target nucleoside. This is the first step in the biosynthesis of wybutosine (yW), a modified base adjacent to the anticodon of tRNAs and required for accurate decoding.</text>
</comment>
<comment type="catalytic activity">
    <reaction evidence="1">
        <text>guanosine(37) in tRNA + S-adenosyl-L-methionine = N(1)-methylguanosine(37) in tRNA + S-adenosyl-L-homocysteine + H(+)</text>
        <dbReference type="Rhea" id="RHEA:36899"/>
        <dbReference type="Rhea" id="RHEA-COMP:10145"/>
        <dbReference type="Rhea" id="RHEA-COMP:10147"/>
        <dbReference type="ChEBI" id="CHEBI:15378"/>
        <dbReference type="ChEBI" id="CHEBI:57856"/>
        <dbReference type="ChEBI" id="CHEBI:59789"/>
        <dbReference type="ChEBI" id="CHEBI:73542"/>
        <dbReference type="ChEBI" id="CHEBI:74269"/>
        <dbReference type="EC" id="2.1.1.228"/>
    </reaction>
</comment>
<comment type="subunit">
    <text evidence="1">Monomer.</text>
</comment>
<comment type="subcellular location">
    <subcellularLocation>
        <location evidence="1">Mitochondrion matrix</location>
    </subcellularLocation>
    <subcellularLocation>
        <location evidence="1">Nucleus</location>
    </subcellularLocation>
    <subcellularLocation>
        <location evidence="1">Cytoplasm</location>
    </subcellularLocation>
    <text evidence="1">Predominantly in the mitochondria and in the nucleus.</text>
</comment>
<comment type="similarity">
    <text evidence="3">Belongs to the class I-like SAM-binding methyltransferase superfamily. TRM5/TYW2 family.</text>
</comment>
<name>TRM5_HETP5</name>
<gene>
    <name type="primary">trmt5</name>
    <name type="ORF">PPL_11323</name>
</gene>
<proteinExistence type="inferred from homology"/>
<dbReference type="EC" id="2.1.1.228" evidence="1"/>
<dbReference type="EMBL" id="ADBJ01000056">
    <property type="protein sequence ID" value="EFA75248.1"/>
    <property type="molecule type" value="Genomic_DNA"/>
</dbReference>
<dbReference type="RefSeq" id="XP_020427382.1">
    <property type="nucleotide sequence ID" value="XM_020582079.1"/>
</dbReference>
<dbReference type="SMR" id="D3BT31"/>
<dbReference type="FunCoup" id="D3BT31">
    <property type="interactions" value="665"/>
</dbReference>
<dbReference type="STRING" id="670386.D3BT31"/>
<dbReference type="GeneID" id="31366791"/>
<dbReference type="InParanoid" id="D3BT31"/>
<dbReference type="OMA" id="VGSHSQF"/>
<dbReference type="Proteomes" id="UP000001396">
    <property type="component" value="Unassembled WGS sequence"/>
</dbReference>
<dbReference type="GO" id="GO:0005759">
    <property type="term" value="C:mitochondrial matrix"/>
    <property type="evidence" value="ECO:0007669"/>
    <property type="project" value="UniProtKB-SubCell"/>
</dbReference>
<dbReference type="GO" id="GO:0005634">
    <property type="term" value="C:nucleus"/>
    <property type="evidence" value="ECO:0007669"/>
    <property type="project" value="UniProtKB-SubCell"/>
</dbReference>
<dbReference type="GO" id="GO:0052906">
    <property type="term" value="F:tRNA (guanine(37)-N1)-methyltransferase activity"/>
    <property type="evidence" value="ECO:0007669"/>
    <property type="project" value="UniProtKB-UniRule"/>
</dbReference>
<dbReference type="GO" id="GO:0070901">
    <property type="term" value="P:mitochondrial tRNA methylation"/>
    <property type="evidence" value="ECO:0007669"/>
    <property type="project" value="TreeGrafter"/>
</dbReference>
<dbReference type="GO" id="GO:0002939">
    <property type="term" value="P:tRNA N1-guanine methylation"/>
    <property type="evidence" value="ECO:0007669"/>
    <property type="project" value="TreeGrafter"/>
</dbReference>
<dbReference type="CDD" id="cd02440">
    <property type="entry name" value="AdoMet_MTases"/>
    <property type="match status" value="1"/>
</dbReference>
<dbReference type="FunFam" id="3.30.300.110:FF:000001">
    <property type="entry name" value="tRNA (guanine(37)-N1)-methyltransferase"/>
    <property type="match status" value="1"/>
</dbReference>
<dbReference type="Gene3D" id="3.30.300.110">
    <property type="entry name" value="Met-10+ protein-like domains"/>
    <property type="match status" value="1"/>
</dbReference>
<dbReference type="Gene3D" id="3.40.50.150">
    <property type="entry name" value="Vaccinia Virus protein VP39"/>
    <property type="match status" value="1"/>
</dbReference>
<dbReference type="HAMAP" id="MF_03152">
    <property type="entry name" value="TRM5"/>
    <property type="match status" value="1"/>
</dbReference>
<dbReference type="InterPro" id="IPR030382">
    <property type="entry name" value="MeTrfase_TRM5/TYW2"/>
</dbReference>
<dbReference type="InterPro" id="IPR029063">
    <property type="entry name" value="SAM-dependent_MTases_sf"/>
</dbReference>
<dbReference type="InterPro" id="IPR056743">
    <property type="entry name" value="TRM5-TYW2-like_MTfase"/>
</dbReference>
<dbReference type="InterPro" id="IPR056744">
    <property type="entry name" value="TRM5/TYW2-like_N"/>
</dbReference>
<dbReference type="InterPro" id="IPR025792">
    <property type="entry name" value="tRNA_Gua_MeTrfase_euk"/>
</dbReference>
<dbReference type="PANTHER" id="PTHR23245:SF36">
    <property type="entry name" value="TRNA (GUANINE(37)-N1)-METHYLTRANSFERASE"/>
    <property type="match status" value="1"/>
</dbReference>
<dbReference type="PANTHER" id="PTHR23245">
    <property type="entry name" value="TRNA METHYLTRANSFERASE"/>
    <property type="match status" value="1"/>
</dbReference>
<dbReference type="Pfam" id="PF02475">
    <property type="entry name" value="TRM5-TYW2_MTfase"/>
    <property type="match status" value="1"/>
</dbReference>
<dbReference type="Pfam" id="PF25133">
    <property type="entry name" value="TYW2_N_2"/>
    <property type="match status" value="1"/>
</dbReference>
<dbReference type="SUPFAM" id="SSF53335">
    <property type="entry name" value="S-adenosyl-L-methionine-dependent methyltransferases"/>
    <property type="match status" value="1"/>
</dbReference>
<dbReference type="PROSITE" id="PS51684">
    <property type="entry name" value="SAM_MT_TRM5_TYW2"/>
    <property type="match status" value="1"/>
</dbReference>
<feature type="chain" id="PRO_0000414134" description="tRNA (guanine(37)-N(1))-methyltransferase">
    <location>
        <begin position="1"/>
        <end position="426"/>
    </location>
</feature>
<feature type="region of interest" description="Disordered" evidence="2">
    <location>
        <begin position="374"/>
        <end position="426"/>
    </location>
</feature>
<feature type="compositionally biased region" description="Low complexity" evidence="2">
    <location>
        <begin position="396"/>
        <end position="407"/>
    </location>
</feature>
<feature type="binding site" evidence="1">
    <location>
        <position position="203"/>
    </location>
    <ligand>
        <name>S-adenosyl-L-methionine</name>
        <dbReference type="ChEBI" id="CHEBI:59789"/>
    </ligand>
</feature>
<feature type="binding site" evidence="1">
    <location>
        <begin position="242"/>
        <end position="243"/>
    </location>
    <ligand>
        <name>S-adenosyl-L-methionine</name>
        <dbReference type="ChEBI" id="CHEBI:59789"/>
    </ligand>
</feature>
<feature type="binding site" evidence="1">
    <location>
        <begin position="269"/>
        <end position="270"/>
    </location>
    <ligand>
        <name>S-adenosyl-L-methionine</name>
        <dbReference type="ChEBI" id="CHEBI:59789"/>
    </ligand>
</feature>
<feature type="binding site" evidence="1">
    <location>
        <position position="292"/>
    </location>
    <ligand>
        <name>S-adenosyl-L-methionine</name>
        <dbReference type="ChEBI" id="CHEBI:59789"/>
    </ligand>
</feature>
<protein>
    <recommendedName>
        <fullName evidence="1">tRNA (guanine(37)-N(1))-methyltransferase</fullName>
        <ecNumber evidence="1">2.1.1.228</ecNumber>
    </recommendedName>
    <alternativeName>
        <fullName evidence="1">M1G-methyltransferase</fullName>
    </alternativeName>
    <alternativeName>
        <fullName evidence="1">tRNA [GM37] methyltransferase</fullName>
    </alternativeName>
    <alternativeName>
        <fullName evidence="1">tRNA methyltransferase 5 homolog</fullName>
    </alternativeName>
</protein>
<accession>D3BT31</accession>
<evidence type="ECO:0000255" key="1">
    <source>
        <dbReference type="HAMAP-Rule" id="MF_03152"/>
    </source>
</evidence>
<evidence type="ECO:0000256" key="2">
    <source>
        <dbReference type="SAM" id="MobiDB-lite"/>
    </source>
</evidence>
<evidence type="ECO:0000305" key="3"/>
<reference key="1">
    <citation type="journal article" date="2011" name="Genome Res.">
        <title>Phylogeny-wide analysis of social amoeba genomes highlights ancient origins for complex intercellular communication.</title>
        <authorList>
            <person name="Heidel A.J."/>
            <person name="Lawal H.M."/>
            <person name="Felder M."/>
            <person name="Schilde C."/>
            <person name="Helps N.R."/>
            <person name="Tunggal B."/>
            <person name="Rivero F."/>
            <person name="John U."/>
            <person name="Schleicher M."/>
            <person name="Eichinger L."/>
            <person name="Platzer M."/>
            <person name="Noegel A.A."/>
            <person name="Schaap P."/>
            <person name="Gloeckner G."/>
        </authorList>
    </citation>
    <scope>NUCLEOTIDE SEQUENCE [LARGE SCALE GENOMIC DNA]</scope>
    <source>
        <strain>ATCC 26659 / Pp 5 / PN500</strain>
    </source>
</reference>